<organism>
    <name type="scientific">Arthroderma otae</name>
    <name type="common">Microsporum canis</name>
    <dbReference type="NCBI Taxonomy" id="63405"/>
    <lineage>
        <taxon>Eukaryota</taxon>
        <taxon>Fungi</taxon>
        <taxon>Dikarya</taxon>
        <taxon>Ascomycota</taxon>
        <taxon>Pezizomycotina</taxon>
        <taxon>Eurotiomycetes</taxon>
        <taxon>Eurotiomycetidae</taxon>
        <taxon>Onygenales</taxon>
        <taxon>Arthrodermataceae</taxon>
        <taxon>Microsporum</taxon>
    </lineage>
</organism>
<gene>
    <name type="primary">MEP2</name>
</gene>
<keyword id="KW-0325">Glycoprotein</keyword>
<keyword id="KW-0378">Hydrolase</keyword>
<keyword id="KW-0479">Metal-binding</keyword>
<keyword id="KW-0482">Metalloprotease</keyword>
<keyword id="KW-0645">Protease</keyword>
<keyword id="KW-0964">Secreted</keyword>
<keyword id="KW-0732">Signal</keyword>
<keyword id="KW-0843">Virulence</keyword>
<keyword id="KW-0862">Zinc</keyword>
<keyword id="KW-0865">Zymogen</keyword>
<dbReference type="EC" id="3.4.24.-"/>
<dbReference type="EMBL" id="AJ490185">
    <property type="protein sequence ID" value="CAD35290.1"/>
    <property type="molecule type" value="Genomic_DNA"/>
</dbReference>
<dbReference type="SMR" id="Q8J0D4"/>
<dbReference type="MEROPS" id="M36.001"/>
<dbReference type="GlyCosmos" id="Q8J0D4">
    <property type="glycosylation" value="1 site, No reported glycans"/>
</dbReference>
<dbReference type="GO" id="GO:0005576">
    <property type="term" value="C:extracellular region"/>
    <property type="evidence" value="ECO:0007669"/>
    <property type="project" value="UniProtKB-SubCell"/>
</dbReference>
<dbReference type="GO" id="GO:0004222">
    <property type="term" value="F:metalloendopeptidase activity"/>
    <property type="evidence" value="ECO:0007669"/>
    <property type="project" value="InterPro"/>
</dbReference>
<dbReference type="GO" id="GO:0008270">
    <property type="term" value="F:zinc ion binding"/>
    <property type="evidence" value="ECO:0007669"/>
    <property type="project" value="InterPro"/>
</dbReference>
<dbReference type="GO" id="GO:0006508">
    <property type="term" value="P:proteolysis"/>
    <property type="evidence" value="ECO:0007669"/>
    <property type="project" value="UniProtKB-KW"/>
</dbReference>
<dbReference type="CDD" id="cd09596">
    <property type="entry name" value="M36"/>
    <property type="match status" value="1"/>
</dbReference>
<dbReference type="Gene3D" id="3.10.170.10">
    <property type="match status" value="1"/>
</dbReference>
<dbReference type="Gene3D" id="1.10.390.10">
    <property type="entry name" value="Neutral Protease Domain 2"/>
    <property type="match status" value="1"/>
</dbReference>
<dbReference type="InterPro" id="IPR011096">
    <property type="entry name" value="FTP_domain"/>
</dbReference>
<dbReference type="InterPro" id="IPR050371">
    <property type="entry name" value="Fungal_virulence_M36"/>
</dbReference>
<dbReference type="InterPro" id="IPR001842">
    <property type="entry name" value="Peptidase_M36"/>
</dbReference>
<dbReference type="InterPro" id="IPR027268">
    <property type="entry name" value="Peptidase_M4/M1_CTD_sf"/>
</dbReference>
<dbReference type="PANTHER" id="PTHR33478">
    <property type="entry name" value="EXTRACELLULAR METALLOPROTEINASE MEP"/>
    <property type="match status" value="1"/>
</dbReference>
<dbReference type="PANTHER" id="PTHR33478:SF1">
    <property type="entry name" value="EXTRACELLULAR METALLOPROTEINASE MEP"/>
    <property type="match status" value="1"/>
</dbReference>
<dbReference type="Pfam" id="PF07504">
    <property type="entry name" value="FTP"/>
    <property type="match status" value="1"/>
</dbReference>
<dbReference type="Pfam" id="PF02128">
    <property type="entry name" value="Peptidase_M36"/>
    <property type="match status" value="1"/>
</dbReference>
<dbReference type="PRINTS" id="PR00999">
    <property type="entry name" value="FUNGALYSIN"/>
</dbReference>
<dbReference type="SUPFAM" id="SSF55486">
    <property type="entry name" value="Metalloproteases ('zincins'), catalytic domain"/>
    <property type="match status" value="1"/>
</dbReference>
<dbReference type="PROSITE" id="PS00142">
    <property type="entry name" value="ZINC_PROTEASE"/>
    <property type="match status" value="1"/>
</dbReference>
<evidence type="ECO:0000250" key="1"/>
<evidence type="ECO:0000255" key="2"/>
<evidence type="ECO:0000255" key="3">
    <source>
        <dbReference type="PROSITE-ProRule" id="PRU10095"/>
    </source>
</evidence>
<evidence type="ECO:0000256" key="4">
    <source>
        <dbReference type="SAM" id="MobiDB-lite"/>
    </source>
</evidence>
<evidence type="ECO:0000305" key="5"/>
<accession>Q8J0D4</accession>
<feature type="signal peptide" evidence="2">
    <location>
        <begin position="1"/>
        <end position="19"/>
    </location>
</feature>
<feature type="propeptide" id="PRO_5000068602" evidence="1">
    <location>
        <begin position="20"/>
        <end position="244"/>
    </location>
</feature>
<feature type="chain" id="PRO_5000068603" description="Extracellular metalloproteinase 2">
    <location>
        <begin position="245"/>
        <end position="632"/>
    </location>
</feature>
<feature type="region of interest" description="Disordered" evidence="4">
    <location>
        <begin position="294"/>
        <end position="313"/>
    </location>
</feature>
<feature type="compositionally biased region" description="Polar residues" evidence="4">
    <location>
        <begin position="294"/>
        <end position="310"/>
    </location>
</feature>
<feature type="active site" evidence="3">
    <location>
        <position position="430"/>
    </location>
</feature>
<feature type="binding site" evidence="3">
    <location>
        <position position="429"/>
    </location>
    <ligand>
        <name>Zn(2+)</name>
        <dbReference type="ChEBI" id="CHEBI:29105"/>
        <note>catalytic</note>
    </ligand>
</feature>
<feature type="binding site" evidence="3">
    <location>
        <position position="433"/>
    </location>
    <ligand>
        <name>Zn(2+)</name>
        <dbReference type="ChEBI" id="CHEBI:29105"/>
        <note>catalytic</note>
    </ligand>
</feature>
<feature type="glycosylation site" description="N-linked (GlcNAc...) asparagine" evidence="2">
    <location>
        <position position="270"/>
    </location>
</feature>
<protein>
    <recommendedName>
        <fullName>Extracellular metalloproteinase 2</fullName>
        <ecNumber>3.4.24.-</ecNumber>
    </recommendedName>
    <alternativeName>
        <fullName>Fungalysin MEP2</fullName>
    </alternativeName>
</protein>
<proteinExistence type="inferred from homology"/>
<reference key="1">
    <citation type="journal article" date="2002" name="Infect. Immun.">
        <title>Secreted metalloprotease gene family of Microsporum canis.</title>
        <authorList>
            <person name="Brouta F."/>
            <person name="Descamps F."/>
            <person name="Monod M."/>
            <person name="Vermout S."/>
            <person name="Losson B."/>
            <person name="Mignon B."/>
        </authorList>
    </citation>
    <scope>NUCLEOTIDE SEQUENCE [GENOMIC DNA]</scope>
    <source>
        <strain>IHEM 15221</strain>
    </source>
</reference>
<name>MEP2_ARTOT</name>
<comment type="function">
    <text evidence="1">Secreted metalloproteinase probably acting as a virulence factor.</text>
</comment>
<comment type="cofactor">
    <cofactor evidence="1">
        <name>Zn(2+)</name>
        <dbReference type="ChEBI" id="CHEBI:29105"/>
    </cofactor>
    <text evidence="1">Binds 1 zinc ion per subunit.</text>
</comment>
<comment type="subcellular location">
    <subcellularLocation>
        <location evidence="1">Secreted</location>
    </subcellularLocation>
</comment>
<comment type="similarity">
    <text evidence="5">Belongs to the peptidase M36 family.</text>
</comment>
<sequence length="632" mass="69468">MHGLLLAGLAVALPLGVAGHPARPQTALSPRGIDVNAYRFTSTAKYNEHKTTSQMVQSFAYSKDDDYVATATKLVKSTFPNMTFRTVKDHYIGTNGIGHVHFKQTAHDIDIDNADFNVNIGRDGKVFTFGNSFYQGEMPKTNPMVKRDYSDPVKALHGAIKTLKIPVKPESAKAMPMDEVETFKFEGTSGALSEPKAKLVYIQKDGNLHLTWRVETDVGDNWLLSYVDSKESETVHNVVDYVASADYKVFAFGLNDPTEGQPSMIKDPWNTTGSGSPFTWHGDGKTDYTVTRGNNVAAQDNPSGGSQWENNYRPDSPQLSFVYDYSDQMEPEDYKDFAITQLFYTTNTFHDVLYSLGFTEEAGNFQVNNGNKGGKGNDFAICNAQDGSGTNNANFATPPDGQPGRMRMYTWTTSKPKRDGDLEAGIVIHEYTHGLSNRLCGGPANSNCLNDLEAGGMGEGWGDFYATAIRLKQGDTHDTDYTMGEWAANQKGGIREYPYSTNMQTNPYTYADVKGMREVHGIGTVWATILYDVLWNLIDDHGMGKNVMPKMVDGVPTDGRTLAMKLVLDGMTLMPCNPNFMQARDAIIDADMALTKGANKCSLMKAFAKRGLGSNTKPGKGYTNNFDMPSGC</sequence>